<organism>
    <name type="scientific">Buchnera aphidicola subsp. Baizongia pistaciae (strain Bp)</name>
    <dbReference type="NCBI Taxonomy" id="224915"/>
    <lineage>
        <taxon>Bacteria</taxon>
        <taxon>Pseudomonadati</taxon>
        <taxon>Pseudomonadota</taxon>
        <taxon>Gammaproteobacteria</taxon>
        <taxon>Enterobacterales</taxon>
        <taxon>Erwiniaceae</taxon>
        <taxon>Buchnera</taxon>
    </lineage>
</organism>
<sequence>MNKEILAVVEAVSNEKSLPREKIFEALECALAIATKKKYDQEIDVRVKINRKNGNFETFRRWLVVNQVLQPTKEITLEAAKFEDVTVKVNDYIEDKMISVTFDRITTQTAKQVIVQKVREAERAMIVEQFRKYFGKILTGIVKKINRESITLDLGNNAEALILKEDMLPRENFRLGDRVRGVLYAIYPESRGAQLFVTRSKPEMLIELFKIEVPEIGEEIIEIKSAARDPGSRAKIAVKSNDKRVDAVGACVGMRGARVQAVSSELCGERIDIVLWDKNSAQFIINSMAPAEVSSIVLDEDRHTIDIAVDSNNLAQAIGRNGQNVRLASQLSGWEINVMTVDDLKLKHQEEKDKILNIFTKYLKIDQKISNILIDEGFSSIEELVYIPFNELLNINSITQELAYSIRESAKKALCAIELENKKVINERKLHKDLLNLKGMNQKLAFKLAKKNIFSLEDLAEQGIDDLIDIENLNSNTAGMLIMAARNICWFGNKTSA</sequence>
<accession>Q89AF4</accession>
<comment type="function">
    <text evidence="1">Participates in both transcription termination and antitermination.</text>
</comment>
<comment type="subunit">
    <text evidence="1">Monomer. Binds directly to the core enzyme of the DNA-dependent RNA polymerase and to nascent RNA.</text>
</comment>
<comment type="subcellular location">
    <subcellularLocation>
        <location evidence="1">Cytoplasm</location>
    </subcellularLocation>
</comment>
<comment type="similarity">
    <text evidence="1">Belongs to the NusA family.</text>
</comment>
<gene>
    <name evidence="1" type="primary">nusA</name>
    <name type="ordered locus">bbp_341</name>
</gene>
<protein>
    <recommendedName>
        <fullName evidence="1">Transcription termination/antitermination protein NusA</fullName>
    </recommendedName>
</protein>
<reference key="1">
    <citation type="journal article" date="2003" name="Proc. Natl. Acad. Sci. U.S.A.">
        <title>Reductive genome evolution in Buchnera aphidicola.</title>
        <authorList>
            <person name="van Ham R.C.H.J."/>
            <person name="Kamerbeek J."/>
            <person name="Palacios C."/>
            <person name="Rausell C."/>
            <person name="Abascal F."/>
            <person name="Bastolla U."/>
            <person name="Fernandez J.M."/>
            <person name="Jimenez L."/>
            <person name="Postigo M."/>
            <person name="Silva F.J."/>
            <person name="Tamames J."/>
            <person name="Viguera E."/>
            <person name="Latorre A."/>
            <person name="Valencia A."/>
            <person name="Moran F."/>
            <person name="Moya A."/>
        </authorList>
    </citation>
    <scope>NUCLEOTIDE SEQUENCE [LARGE SCALE GENOMIC DNA]</scope>
    <source>
        <strain>Bp</strain>
    </source>
</reference>
<dbReference type="EMBL" id="AE016826">
    <property type="protein sequence ID" value="AAO27062.1"/>
    <property type="molecule type" value="Genomic_DNA"/>
</dbReference>
<dbReference type="RefSeq" id="WP_011091463.1">
    <property type="nucleotide sequence ID" value="NC_004545.1"/>
</dbReference>
<dbReference type="SMR" id="Q89AF4"/>
<dbReference type="STRING" id="224915.bbp_341"/>
<dbReference type="KEGG" id="bab:bbp_341"/>
<dbReference type="eggNOG" id="COG0195">
    <property type="taxonomic scope" value="Bacteria"/>
</dbReference>
<dbReference type="HOGENOM" id="CLU_029242_0_0_6"/>
<dbReference type="OrthoDB" id="9807233at2"/>
<dbReference type="Proteomes" id="UP000000601">
    <property type="component" value="Chromosome"/>
</dbReference>
<dbReference type="GO" id="GO:0005829">
    <property type="term" value="C:cytosol"/>
    <property type="evidence" value="ECO:0007669"/>
    <property type="project" value="TreeGrafter"/>
</dbReference>
<dbReference type="GO" id="GO:0003700">
    <property type="term" value="F:DNA-binding transcription factor activity"/>
    <property type="evidence" value="ECO:0007669"/>
    <property type="project" value="InterPro"/>
</dbReference>
<dbReference type="GO" id="GO:0000166">
    <property type="term" value="F:nucleotide binding"/>
    <property type="evidence" value="ECO:0007669"/>
    <property type="project" value="InterPro"/>
</dbReference>
<dbReference type="GO" id="GO:0003723">
    <property type="term" value="F:RNA binding"/>
    <property type="evidence" value="ECO:0007669"/>
    <property type="project" value="UniProtKB-UniRule"/>
</dbReference>
<dbReference type="GO" id="GO:0006353">
    <property type="term" value="P:DNA-templated transcription termination"/>
    <property type="evidence" value="ECO:0007669"/>
    <property type="project" value="UniProtKB-UniRule"/>
</dbReference>
<dbReference type="GO" id="GO:0031564">
    <property type="term" value="P:transcription antitermination"/>
    <property type="evidence" value="ECO:0007669"/>
    <property type="project" value="UniProtKB-UniRule"/>
</dbReference>
<dbReference type="CDD" id="cd02134">
    <property type="entry name" value="KH-II_NusA_rpt1"/>
    <property type="match status" value="1"/>
</dbReference>
<dbReference type="CDD" id="cd22529">
    <property type="entry name" value="KH-II_NusA_rpt2"/>
    <property type="match status" value="1"/>
</dbReference>
<dbReference type="CDD" id="cd04455">
    <property type="entry name" value="S1_NusA"/>
    <property type="match status" value="1"/>
</dbReference>
<dbReference type="FunFam" id="1.10.150.20:FF:000015">
    <property type="entry name" value="Transcription termination/antitermination protein NusA"/>
    <property type="match status" value="1"/>
</dbReference>
<dbReference type="FunFam" id="3.30.1480.10:FF:000001">
    <property type="entry name" value="Transcription termination/antitermination protein NusA"/>
    <property type="match status" value="1"/>
</dbReference>
<dbReference type="FunFam" id="3.30.300.20:FF:000002">
    <property type="entry name" value="Transcription termination/antitermination protein NusA"/>
    <property type="match status" value="1"/>
</dbReference>
<dbReference type="FunFam" id="3.30.300.20:FF:000005">
    <property type="entry name" value="Transcription termination/antitermination protein NusA"/>
    <property type="match status" value="1"/>
</dbReference>
<dbReference type="Gene3D" id="3.30.300.20">
    <property type="match status" value="2"/>
</dbReference>
<dbReference type="Gene3D" id="1.10.150.20">
    <property type="entry name" value="5' to 3' exonuclease, C-terminal subdomain"/>
    <property type="match status" value="2"/>
</dbReference>
<dbReference type="Gene3D" id="2.40.50.140">
    <property type="entry name" value="Nucleic acid-binding proteins"/>
    <property type="match status" value="1"/>
</dbReference>
<dbReference type="Gene3D" id="3.30.1480.10">
    <property type="entry name" value="NusA, N-terminal domain"/>
    <property type="match status" value="1"/>
</dbReference>
<dbReference type="HAMAP" id="MF_00945_B">
    <property type="entry name" value="NusA_B"/>
    <property type="match status" value="1"/>
</dbReference>
<dbReference type="InterPro" id="IPR010995">
    <property type="entry name" value="DNA_repair_Rad51/TF_NusA_a-hlx"/>
</dbReference>
<dbReference type="InterPro" id="IPR004087">
    <property type="entry name" value="KH_dom"/>
</dbReference>
<dbReference type="InterPro" id="IPR015946">
    <property type="entry name" value="KH_dom-like_a/b"/>
</dbReference>
<dbReference type="InterPro" id="IPR025249">
    <property type="entry name" value="KH_dom_NusA-like"/>
</dbReference>
<dbReference type="InterPro" id="IPR009019">
    <property type="entry name" value="KH_sf_prok-type"/>
</dbReference>
<dbReference type="InterPro" id="IPR012340">
    <property type="entry name" value="NA-bd_OB-fold"/>
</dbReference>
<dbReference type="InterPro" id="IPR030842">
    <property type="entry name" value="NusA_bac"/>
</dbReference>
<dbReference type="InterPro" id="IPR036555">
    <property type="entry name" value="NusA_N_sf"/>
</dbReference>
<dbReference type="InterPro" id="IPR003029">
    <property type="entry name" value="S1_domain"/>
</dbReference>
<dbReference type="InterPro" id="IPR013735">
    <property type="entry name" value="TF_NusA_N"/>
</dbReference>
<dbReference type="InterPro" id="IPR010214">
    <property type="entry name" value="Tscrpt_termin_fac_NusA_C_rpt"/>
</dbReference>
<dbReference type="InterPro" id="IPR010213">
    <property type="entry name" value="Tscrpt_termination_fac_NusA"/>
</dbReference>
<dbReference type="NCBIfam" id="TIGR01953">
    <property type="entry name" value="NusA"/>
    <property type="match status" value="1"/>
</dbReference>
<dbReference type="NCBIfam" id="TIGR01954">
    <property type="entry name" value="nusA_Cterm_rpt"/>
    <property type="match status" value="1"/>
</dbReference>
<dbReference type="PANTHER" id="PTHR22648">
    <property type="entry name" value="TRANSCRIPTION TERMINATION FACTOR NUSA"/>
    <property type="match status" value="1"/>
</dbReference>
<dbReference type="PANTHER" id="PTHR22648:SF0">
    <property type="entry name" value="TRANSCRIPTION TERMINATION_ANTITERMINATION PROTEIN NUSA"/>
    <property type="match status" value="1"/>
</dbReference>
<dbReference type="Pfam" id="PF14520">
    <property type="entry name" value="HHH_5"/>
    <property type="match status" value="1"/>
</dbReference>
<dbReference type="Pfam" id="PF13184">
    <property type="entry name" value="KH_5"/>
    <property type="match status" value="1"/>
</dbReference>
<dbReference type="Pfam" id="PF08529">
    <property type="entry name" value="NusA_N"/>
    <property type="match status" value="1"/>
</dbReference>
<dbReference type="SMART" id="SM00322">
    <property type="entry name" value="KH"/>
    <property type="match status" value="2"/>
</dbReference>
<dbReference type="SMART" id="SM00316">
    <property type="entry name" value="S1"/>
    <property type="match status" value="1"/>
</dbReference>
<dbReference type="SUPFAM" id="SSF50249">
    <property type="entry name" value="Nucleic acid-binding proteins"/>
    <property type="match status" value="1"/>
</dbReference>
<dbReference type="SUPFAM" id="SSF54814">
    <property type="entry name" value="Prokaryotic type KH domain (KH-domain type II)"/>
    <property type="match status" value="2"/>
</dbReference>
<dbReference type="SUPFAM" id="SSF47794">
    <property type="entry name" value="Rad51 N-terminal domain-like"/>
    <property type="match status" value="2"/>
</dbReference>
<dbReference type="SUPFAM" id="SSF69705">
    <property type="entry name" value="Transcription factor NusA, N-terminal domain"/>
    <property type="match status" value="1"/>
</dbReference>
<dbReference type="PROSITE" id="PS50084">
    <property type="entry name" value="KH_TYPE_1"/>
    <property type="match status" value="1"/>
</dbReference>
<dbReference type="PROSITE" id="PS50126">
    <property type="entry name" value="S1"/>
    <property type="match status" value="1"/>
</dbReference>
<name>NUSA_BUCBP</name>
<feature type="chain" id="PRO_0000181964" description="Transcription termination/antitermination protein NusA">
    <location>
        <begin position="1"/>
        <end position="497"/>
    </location>
</feature>
<feature type="domain" description="S1 motif" evidence="1">
    <location>
        <begin position="135"/>
        <end position="200"/>
    </location>
</feature>
<feature type="domain" description="KH" evidence="1">
    <location>
        <begin position="302"/>
        <end position="372"/>
    </location>
</feature>
<feature type="repeat" description="1">
    <location>
        <begin position="364"/>
        <end position="414"/>
    </location>
</feature>
<feature type="repeat" description="2">
    <location>
        <begin position="439"/>
        <end position="489"/>
    </location>
</feature>
<feature type="region of interest" description="2 X 51 AA approximate repeats" evidence="1">
    <location>
        <begin position="364"/>
        <end position="489"/>
    </location>
</feature>
<keyword id="KW-0963">Cytoplasm</keyword>
<keyword id="KW-1185">Reference proteome</keyword>
<keyword id="KW-0677">Repeat</keyword>
<keyword id="KW-0694">RNA-binding</keyword>
<keyword id="KW-0804">Transcription</keyword>
<keyword id="KW-0889">Transcription antitermination</keyword>
<keyword id="KW-0805">Transcription regulation</keyword>
<keyword id="KW-0806">Transcription termination</keyword>
<proteinExistence type="inferred from homology"/>
<evidence type="ECO:0000255" key="1">
    <source>
        <dbReference type="HAMAP-Rule" id="MF_00945"/>
    </source>
</evidence>